<reference key="1">
    <citation type="journal article" date="1985" name="J. Med. Virol.">
        <title>Comparative sequence analysis of duck and human hepatitis B virus genomes.</title>
        <authorList>
            <person name="Sprengel R."/>
            <person name="Kuhn C."/>
            <person name="Will H."/>
            <person name="Schaller H."/>
        </authorList>
    </citation>
    <scope>NUCLEOTIDE SEQUENCE [GENOMIC DNA]</scope>
</reference>
<reference key="2">
    <citation type="journal article" date="1994" name="J. Virol.">
        <title>Hepadnavirus P protein utilizes a tyrosine residue in the TP domain to prime reverse transcription.</title>
        <authorList>
            <person name="Weber M."/>
            <person name="Bronsema V."/>
            <person name="Bartos H."/>
            <person name="Bosserhoff A."/>
            <person name="Bartenschlager R."/>
            <person name="Schaller H."/>
        </authorList>
    </citation>
    <scope>REVERSE TRANSCRIPTION PRIMING</scope>
    <scope>MUTAGENESIS OF TYR-96; TYR-170; TYR-181 AND ASP-513</scope>
</reference>
<reference key="3">
    <citation type="journal article" date="2005" name="J. Virol.">
        <title>Identification of an essential molecular contact point on the duck hepatitis B virus reverse transcriptase.</title>
        <authorList>
            <person name="Cao F."/>
            <person name="Badtke M.P."/>
            <person name="Metzger L.M."/>
            <person name="Yao E."/>
            <person name="Adeyemo B."/>
            <person name="Gong Y."/>
            <person name="Tavis J.E."/>
        </authorList>
    </citation>
    <scope>FUNCTION</scope>
</reference>
<reference key="4">
    <citation type="journal article" date="2007" name="World J. Gastroenterol.">
        <title>Hepatitis B virus replication.</title>
        <authorList>
            <person name="Beck J."/>
            <person name="Nassal M."/>
        </authorList>
    </citation>
    <scope>REVIEW</scope>
</reference>
<sequence>MPQPLKQSLDQSKWLREAEKQLRVLENLVDSNLEEEKLKPQLSMGEDVQSPGKGEPLHPNVRAPLSHVVRAVTTDLPRLGNKLPARHHLGKLSGLYQMKGCTFNPEWKVPDISDTHFDLEVINECPSRNWKYLTPAKFWPKSISYFPVQAGVKPKYPDNVMQHESIVGKYLTRLYEAGILYKRISKHLVTFKGQPYNWEQQHLVNQHQIPDGATSSKINGRQENRRRRTPIKSTCRQNDTKRDSDMVGQVSNNRSRIRPCANNGGDKHPPATGSLACWGRKASRVIKSGSSRDSSASVDSRRRSKGPRGFSTLPRRETTGNDHHSSDISNSVEATTRRRSTPGESITLGDSSIIPDGTSCASDKDSSPKEENVWYLRGNTSWPNRITGKLFLVDKNSRNTTEARLVVDFSQFSKGKNAMRFPRYWSPNLSTLRRILPVGMPRISLDLSQAFYHLPLNPASSSRLAVSDGQWVYYFRKAPMGVGLSPFLLHLFTTALGSEISRRFNVWTFTYMDDFLLCHPNARHLNSISHAVCSFLQELGIRINFDKTTPSPVTEIRFLGYQIDEHFMKIEESRWKELRTVIKKIKVGEWYDWKCIQRFVGHLNFVLPFTKGNIEMLKPMYAAITNQVNFSFSSAYRTLLYKLTMGVCKLRINPKSSVPLPRVATDATPTHGAISHITGGSAVFAFSKVRDIHIQELLMTCLARIMIKPRCLLSDSTFVCHKRYQTLPWHFAVLAKQLLKPIQLYFVPSKYNPADGPSRHRPPDWTAFPYTPLSKAIYIPHRLCGT</sequence>
<evidence type="ECO:0000250" key="1"/>
<evidence type="ECO:0000255" key="2">
    <source>
        <dbReference type="PROSITE-ProRule" id="PRU00405"/>
    </source>
</evidence>
<evidence type="ECO:0000256" key="3">
    <source>
        <dbReference type="SAM" id="MobiDB-lite"/>
    </source>
</evidence>
<evidence type="ECO:0000269" key="4">
    <source>
    </source>
</evidence>
<evidence type="ECO:0000269" key="5">
    <source>
    </source>
</evidence>
<evidence type="ECO:0000305" key="6"/>
<dbReference type="EC" id="2.7.7.7"/>
<dbReference type="EC" id="2.7.7.49"/>
<dbReference type="EC" id="3.1.26.4"/>
<dbReference type="EMBL" id="DQ195079">
    <property type="status" value="NOT_ANNOTATED_CDS"/>
    <property type="molecule type" value="Genomic_DNA"/>
</dbReference>
<dbReference type="BindingDB" id="P0C691"/>
<dbReference type="ChEMBL" id="CHEMBL4295573"/>
<dbReference type="Proteomes" id="UP000007204">
    <property type="component" value="Genome"/>
</dbReference>
<dbReference type="GO" id="GO:0003677">
    <property type="term" value="F:DNA binding"/>
    <property type="evidence" value="ECO:0007669"/>
    <property type="project" value="UniProtKB-KW"/>
</dbReference>
<dbReference type="GO" id="GO:0003887">
    <property type="term" value="F:DNA-directed DNA polymerase activity"/>
    <property type="evidence" value="ECO:0007669"/>
    <property type="project" value="UniProtKB-KW"/>
</dbReference>
<dbReference type="GO" id="GO:0046872">
    <property type="term" value="F:metal ion binding"/>
    <property type="evidence" value="ECO:0007669"/>
    <property type="project" value="UniProtKB-KW"/>
</dbReference>
<dbReference type="GO" id="GO:0003964">
    <property type="term" value="F:RNA-directed DNA polymerase activity"/>
    <property type="evidence" value="ECO:0007669"/>
    <property type="project" value="UniProtKB-KW"/>
</dbReference>
<dbReference type="GO" id="GO:0004523">
    <property type="term" value="F:RNA-DNA hybrid ribonuclease activity"/>
    <property type="evidence" value="ECO:0007669"/>
    <property type="project" value="UniProtKB-EC"/>
</dbReference>
<dbReference type="GO" id="GO:0006260">
    <property type="term" value="P:DNA replication"/>
    <property type="evidence" value="ECO:0007669"/>
    <property type="project" value="UniProtKB-KW"/>
</dbReference>
<dbReference type="FunFam" id="3.30.70.270:FF:000058">
    <property type="entry name" value="Protein P"/>
    <property type="match status" value="1"/>
</dbReference>
<dbReference type="Gene3D" id="3.30.70.270">
    <property type="match status" value="1"/>
</dbReference>
<dbReference type="Gene3D" id="3.10.10.10">
    <property type="entry name" value="HIV Type 1 Reverse Transcriptase, subunit A, domain 1"/>
    <property type="match status" value="1"/>
</dbReference>
<dbReference type="InterPro" id="IPR043502">
    <property type="entry name" value="DNA/RNA_pol_sf"/>
</dbReference>
<dbReference type="InterPro" id="IPR001462">
    <property type="entry name" value="DNApol_viral_C"/>
</dbReference>
<dbReference type="InterPro" id="IPR000201">
    <property type="entry name" value="DNApol_viral_N"/>
</dbReference>
<dbReference type="InterPro" id="IPR052055">
    <property type="entry name" value="Hepadnavirus_pol/RT"/>
</dbReference>
<dbReference type="InterPro" id="IPR043128">
    <property type="entry name" value="Rev_trsase/Diguanyl_cyclase"/>
</dbReference>
<dbReference type="InterPro" id="IPR000477">
    <property type="entry name" value="RT_dom"/>
</dbReference>
<dbReference type="PANTHER" id="PTHR33050">
    <property type="entry name" value="REVERSE TRANSCRIPTASE DOMAIN-CONTAINING PROTEIN"/>
    <property type="match status" value="1"/>
</dbReference>
<dbReference type="PANTHER" id="PTHR33050:SF7">
    <property type="entry name" value="RIBONUCLEASE H"/>
    <property type="match status" value="1"/>
</dbReference>
<dbReference type="Pfam" id="PF00336">
    <property type="entry name" value="DNA_pol_viral_C"/>
    <property type="match status" value="1"/>
</dbReference>
<dbReference type="Pfam" id="PF00242">
    <property type="entry name" value="DNA_pol_viral_N"/>
    <property type="match status" value="1"/>
</dbReference>
<dbReference type="Pfam" id="PF00078">
    <property type="entry name" value="RVT_1"/>
    <property type="match status" value="1"/>
</dbReference>
<dbReference type="SUPFAM" id="SSF56672">
    <property type="entry name" value="DNA/RNA polymerases"/>
    <property type="match status" value="1"/>
</dbReference>
<dbReference type="PROSITE" id="PS50878">
    <property type="entry name" value="RT_POL"/>
    <property type="match status" value="1"/>
</dbReference>
<keyword id="KW-0235">DNA replication</keyword>
<keyword id="KW-0238">DNA-binding</keyword>
<keyword id="KW-0239">DNA-directed DNA polymerase</keyword>
<keyword id="KW-0255">Endonuclease</keyword>
<keyword id="KW-0378">Hydrolase</keyword>
<keyword id="KW-0460">Magnesium</keyword>
<keyword id="KW-0479">Metal-binding</keyword>
<keyword id="KW-0511">Multifunctional enzyme</keyword>
<keyword id="KW-0540">Nuclease</keyword>
<keyword id="KW-0548">Nucleotidyltransferase</keyword>
<keyword id="KW-0695">RNA-directed DNA polymerase</keyword>
<keyword id="KW-0808">Transferase</keyword>
<name>DPOL_DHBV3</name>
<proteinExistence type="evidence at protein level"/>
<comment type="function">
    <text evidence="1 4">Multifunctional enzyme that converts the viral RNA genome into dsDNA in viral cytoplasmic capsids. This enzyme displays a DNA polymerase activity that can copy either DNA or RNA templates, and a ribonuclease H (RNase H) activity that cleaves the RNA strand of RNA-DNA heteroduplexes in a partially processive 3'- to 5'-endonucleasic mode. Neo-synthesized pregenomic RNA (pgRNA) are encapsidated together with the P protein, and reverse-transcribed inside the nucleocapsid. Initiation of reverse-transcription occurs first by binding the epsilon loop on the pgRNA genome, and is initiated by protein priming, thereby the 5'-end of (-)DNA is covalently linked to P protein. Partial (+)DNA is synthesized from the (-)DNA template and generates the relaxed circular DNA (RC-DNA) genome. After budding and infection, the RC-DNA migrates in the nucleus, and is converted into a plasmid-like covalently closed circular DNA (cccDNA). The activity of P protein does not seem to be necessary for cccDNA generation, and is presumably released from (+)DNA by host nuclear DNA repair machinery (By similarity).</text>
</comment>
<comment type="catalytic activity">
    <reaction evidence="2">
        <text>DNA(n) + a 2'-deoxyribonucleoside 5'-triphosphate = DNA(n+1) + diphosphate</text>
        <dbReference type="Rhea" id="RHEA:22508"/>
        <dbReference type="Rhea" id="RHEA-COMP:17339"/>
        <dbReference type="Rhea" id="RHEA-COMP:17340"/>
        <dbReference type="ChEBI" id="CHEBI:33019"/>
        <dbReference type="ChEBI" id="CHEBI:61560"/>
        <dbReference type="ChEBI" id="CHEBI:173112"/>
        <dbReference type="EC" id="2.7.7.7"/>
    </reaction>
</comment>
<comment type="catalytic activity">
    <reaction evidence="2">
        <text>DNA(n) + a 2'-deoxyribonucleoside 5'-triphosphate = DNA(n+1) + diphosphate</text>
        <dbReference type="Rhea" id="RHEA:22508"/>
        <dbReference type="Rhea" id="RHEA-COMP:17339"/>
        <dbReference type="Rhea" id="RHEA-COMP:17340"/>
        <dbReference type="ChEBI" id="CHEBI:33019"/>
        <dbReference type="ChEBI" id="CHEBI:61560"/>
        <dbReference type="ChEBI" id="CHEBI:173112"/>
        <dbReference type="EC" id="2.7.7.49"/>
    </reaction>
</comment>
<comment type="catalytic activity">
    <reaction>
        <text>Endonucleolytic cleavage to 5'-phosphomonoester.</text>
        <dbReference type="EC" id="3.1.26.4"/>
    </reaction>
</comment>
<comment type="activity regulation">
    <text>Activated by host HSP70 and HSP40 in vitro to be able to bind the epsilon loop of the pgRNA. Because deletion of the RNase H region renders the protein partly chaperone-independent, the chaperones may be needed indirectly to relieve occlusion of the RNA-binding site by this domain.</text>
</comment>
<comment type="domain">
    <text evidence="1">Terminal protein domain (TP) is hepadnavirus-specific. Spacer domain is highly variable and separates the TP and RT domains. Polymerase/reverse-transcriptase domain (RT) and ribonuclease H domain (RH) are similar to retrovirus reverse transcriptase/RNase H (By similarity).</text>
</comment>
<comment type="domain">
    <text evidence="1">The polymerase/reverse transcriptase (RT) and ribonuclease H (RH) domains are structured in five subdomains: finger, palm, thumb, connection and RNase H. Within the palm subdomain, the 'primer grip' region is thought to be involved in the positioning of the primer terminus for accommodating the incoming nucleotide. The RH domain stabilizes the association of RT with primer-template (By similarity).</text>
</comment>
<comment type="similarity">
    <text evidence="6">Belongs to the hepadnaviridae P protein family.</text>
</comment>
<protein>
    <recommendedName>
        <fullName>Protein P</fullName>
    </recommendedName>
    <domain>
        <recommendedName>
            <fullName>DNA-directed DNA polymerase</fullName>
            <ecNumber>2.7.7.7</ecNumber>
        </recommendedName>
    </domain>
    <domain>
        <recommendedName>
            <fullName>RNA-directed DNA polymerase</fullName>
            <ecNumber>2.7.7.49</ecNumber>
        </recommendedName>
    </domain>
    <domain>
        <recommendedName>
            <fullName>Ribonuclease H</fullName>
            <ecNumber>3.1.26.4</ecNumber>
        </recommendedName>
    </domain>
</protein>
<organismHost>
    <name type="scientific">Anas</name>
    <name type="common">ducks</name>
    <dbReference type="NCBI Taxonomy" id="8835"/>
</organismHost>
<accession>P0C691</accession>
<gene>
    <name type="primary">P</name>
</gene>
<feature type="chain" id="PRO_0000323249" description="Protein P">
    <location>
        <begin position="1"/>
        <end position="786"/>
    </location>
</feature>
<feature type="domain" description="Reverse transcriptase" evidence="2">
    <location>
        <begin position="374"/>
        <end position="563"/>
    </location>
</feature>
<feature type="region of interest" description="Terminal protein domain (TP)" evidence="1">
    <location>
        <begin position="1"/>
        <end position="200"/>
    </location>
</feature>
<feature type="region of interest" description="Disordered" evidence="3">
    <location>
        <begin position="36"/>
        <end position="60"/>
    </location>
</feature>
<feature type="region of interest" description="Spacer" evidence="1">
    <location>
        <begin position="201"/>
        <end position="364"/>
    </location>
</feature>
<feature type="region of interest" description="Disordered" evidence="3">
    <location>
        <begin position="207"/>
        <end position="368"/>
    </location>
</feature>
<feature type="region of interest" description="Polymerase/reverse transcriptase domain (RT)" evidence="1">
    <location>
        <begin position="365"/>
        <end position="653"/>
    </location>
</feature>
<feature type="region of interest" description="RnaseH domain (RH)" evidence="1">
    <location>
        <begin position="654"/>
        <end position="786"/>
    </location>
</feature>
<feature type="compositionally biased region" description="Polar residues" evidence="3">
    <location>
        <begin position="207"/>
        <end position="221"/>
    </location>
</feature>
<feature type="compositionally biased region" description="Low complexity" evidence="3">
    <location>
        <begin position="288"/>
        <end position="298"/>
    </location>
</feature>
<feature type="compositionally biased region" description="Basic and acidic residues" evidence="3">
    <location>
        <begin position="314"/>
        <end position="326"/>
    </location>
</feature>
<feature type="binding site" evidence="2">
    <location>
        <position position="446"/>
    </location>
    <ligand>
        <name>Mg(2+)</name>
        <dbReference type="ChEBI" id="CHEBI:18420"/>
        <note>catalytic</note>
    </ligand>
</feature>
<feature type="binding site" evidence="2">
    <location>
        <position position="513"/>
    </location>
    <ligand>
        <name>Mg(2+)</name>
        <dbReference type="ChEBI" id="CHEBI:18420"/>
        <note>catalytic</note>
    </ligand>
</feature>
<feature type="binding site" evidence="2">
    <location>
        <position position="514"/>
    </location>
    <ligand>
        <name>Mg(2+)</name>
        <dbReference type="ChEBI" id="CHEBI:18420"/>
        <note>catalytic</note>
    </ligand>
</feature>
<feature type="site" description="Priming of reverse-transcription by covalently linking the first nucleotide of the (-)DNA">
    <location>
        <position position="96"/>
    </location>
</feature>
<feature type="mutagenesis site" description="Complete loss of reverse transcription." evidence="5">
    <original>Y</original>
    <variation>F</variation>
    <location>
        <position position="96"/>
    </location>
</feature>
<feature type="mutagenesis site" description="90% loss of reverse transcription." evidence="5">
    <original>Y</original>
    <variation>F</variation>
    <location>
        <position position="170"/>
    </location>
</feature>
<feature type="mutagenesis site" description="No effect on reverse transcription." evidence="5">
    <original>Y</original>
    <variation>F</variation>
    <location>
        <position position="181"/>
    </location>
</feature>
<feature type="mutagenesis site" description="Complete loss of reverse transcription." evidence="5">
    <original>D</original>
    <variation>H</variation>
    <location>
        <position position="513"/>
    </location>
</feature>
<organism>
    <name type="scientific">Duck hepatitis B virus (strain Germany/DHBV-3)</name>
    <name type="common">DHBV</name>
    <dbReference type="NCBI Taxonomy" id="489542"/>
    <lineage>
        <taxon>Viruses</taxon>
        <taxon>Riboviria</taxon>
        <taxon>Pararnavirae</taxon>
        <taxon>Artverviricota</taxon>
        <taxon>Revtraviricetes</taxon>
        <taxon>Blubervirales</taxon>
        <taxon>Hepadnaviridae</taxon>
        <taxon>Avihepadnavirus</taxon>
        <taxon>Duck hepatitis B virus</taxon>
    </lineage>
</organism>